<feature type="chain" id="PRO_0000384034" description="Lactate utilization protein A 2">
    <location>
        <begin position="1"/>
        <end position="242"/>
    </location>
</feature>
<reference key="1">
    <citation type="journal article" date="2009" name="J. Bacteriol.">
        <title>Complete genome sequence of the extremophilic Bacillus cereus strain Q1 with industrial applications.</title>
        <authorList>
            <person name="Xiong Z."/>
            <person name="Jiang Y."/>
            <person name="Qi D."/>
            <person name="Lu H."/>
            <person name="Yang F."/>
            <person name="Yang J."/>
            <person name="Chen L."/>
            <person name="Sun L."/>
            <person name="Xu X."/>
            <person name="Xue Y."/>
            <person name="Zhu Y."/>
            <person name="Jin Q."/>
        </authorList>
    </citation>
    <scope>NUCLEOTIDE SEQUENCE [LARGE SCALE GENOMIC DNA]</scope>
    <source>
        <strain>Q1</strain>
    </source>
</reference>
<gene>
    <name evidence="1" type="primary">lutA2</name>
    <name type="ordered locus">BCQ_3067</name>
</gene>
<sequence length="242" mass="27018">MKVSLFITCLSDVFFPEVGKSVVEIMNQCGVELDFPEGQTCCGQPAYNSGYQEDAKLAAKQMIKAFEHSEYIVTPSGSCASMVHHYYKEMFKGDSEWYEKAVHLADRTYELTDFLVNVLGKNNWKSKLVEKAVFHQSCHMSRALGIKEEPLKLLSQVEGLDIKELPYCQDCCGFGGTFAVKMSSISETMVDEKIKHIEATEANLLIGADMGCLMNIGGRLRRKNKNIQVLHVAEVLAKGLSK</sequence>
<name>LUTA2_BACCQ</name>
<protein>
    <recommendedName>
        <fullName evidence="1">Lactate utilization protein A 2</fullName>
    </recommendedName>
</protein>
<accession>B9IRL0</accession>
<proteinExistence type="inferred from homology"/>
<dbReference type="EMBL" id="CP000227">
    <property type="protein sequence ID" value="ACM13495.1"/>
    <property type="molecule type" value="Genomic_DNA"/>
</dbReference>
<dbReference type="SMR" id="B9IRL0"/>
<dbReference type="KEGG" id="bcq:BCQ_3067"/>
<dbReference type="HOGENOM" id="CLU_023081_1_0_9"/>
<dbReference type="Proteomes" id="UP000000441">
    <property type="component" value="Chromosome"/>
</dbReference>
<dbReference type="GO" id="GO:0005829">
    <property type="term" value="C:cytosol"/>
    <property type="evidence" value="ECO:0007669"/>
    <property type="project" value="TreeGrafter"/>
</dbReference>
<dbReference type="GO" id="GO:0016491">
    <property type="term" value="F:oxidoreductase activity"/>
    <property type="evidence" value="ECO:0007669"/>
    <property type="project" value="UniProtKB-ARBA"/>
</dbReference>
<dbReference type="GO" id="GO:0006089">
    <property type="term" value="P:lactate metabolic process"/>
    <property type="evidence" value="ECO:0007669"/>
    <property type="project" value="UniProtKB-UniRule"/>
</dbReference>
<dbReference type="HAMAP" id="MF_02105">
    <property type="entry name" value="LutA"/>
    <property type="match status" value="1"/>
</dbReference>
<dbReference type="InterPro" id="IPR004017">
    <property type="entry name" value="Cys_rich_dom"/>
</dbReference>
<dbReference type="InterPro" id="IPR022822">
    <property type="entry name" value="LutA"/>
</dbReference>
<dbReference type="PANTHER" id="PTHR30296:SF0">
    <property type="entry name" value="LACTATE UTILIZATION PROTEIN A"/>
    <property type="match status" value="1"/>
</dbReference>
<dbReference type="PANTHER" id="PTHR30296">
    <property type="entry name" value="UNCHARACTERIZED PROTEIN YKGE"/>
    <property type="match status" value="1"/>
</dbReference>
<dbReference type="Pfam" id="PF02754">
    <property type="entry name" value="CCG"/>
    <property type="match status" value="2"/>
</dbReference>
<evidence type="ECO:0000255" key="1">
    <source>
        <dbReference type="HAMAP-Rule" id="MF_02105"/>
    </source>
</evidence>
<organism>
    <name type="scientific">Bacillus cereus (strain Q1)</name>
    <dbReference type="NCBI Taxonomy" id="361100"/>
    <lineage>
        <taxon>Bacteria</taxon>
        <taxon>Bacillati</taxon>
        <taxon>Bacillota</taxon>
        <taxon>Bacilli</taxon>
        <taxon>Bacillales</taxon>
        <taxon>Bacillaceae</taxon>
        <taxon>Bacillus</taxon>
        <taxon>Bacillus cereus group</taxon>
    </lineage>
</organism>
<comment type="function">
    <text evidence="1">Is involved in L-lactate degradation and allows cells to grow with lactate as the sole carbon source.</text>
</comment>
<comment type="similarity">
    <text evidence="1">Belongs to the LutA/YkgE family.</text>
</comment>